<sequence>MFEVVIGLEVHAQLNTKTKIFCSCATSFGEAPNTNVCPTCLALPGALPVLNEEAVKKAIAFGKAVNATINKKSVFNRKNYFYPDLPKAYQISQFDIPIVEKGELFINVKGENKRIGITRAHLEEDAGKNIHESNFSKVDLNRAGTPLLEIVSEPELRSSDEAVAYLKKLHSIIRFLDISDANMQEGSFRCDANVSIRPKGDTKLYTRVEIKNLNSFRFIQKAIEYEVKRQSEAWEDGTYEQEVVQETRLFDTTNLVTRSMRGKEEAAEYRYFPDPDLLPVLLKDEFLDIKIPELPDEKKVRFIDKLGIKESDAEVLISSLEMSRFFESLISQNLNPKLCVNWLNTELMGLLKGELTIENSPVDAQKLGVLIKRIEDGTISAKAAKDVLAFVFENTSVEIDEAIEKLGLKQVSDDSAIEAVIEQILNANADKVAEYKSGKDKLFGFFVGQTMKEGKGAFNPAKVNEILKTKLG</sequence>
<comment type="function">
    <text evidence="1">Allows the formation of correctly charged Asn-tRNA(Asn) or Gln-tRNA(Gln) through the transamidation of misacylated Asp-tRNA(Asn) or Glu-tRNA(Gln) in organisms which lack either or both of asparaginyl-tRNA or glutaminyl-tRNA synthetases. The reaction takes place in the presence of glutamine and ATP through an activated phospho-Asp-tRNA(Asn) or phospho-Glu-tRNA(Gln).</text>
</comment>
<comment type="catalytic activity">
    <reaction evidence="1">
        <text>L-glutamyl-tRNA(Gln) + L-glutamine + ATP + H2O = L-glutaminyl-tRNA(Gln) + L-glutamate + ADP + phosphate + H(+)</text>
        <dbReference type="Rhea" id="RHEA:17521"/>
        <dbReference type="Rhea" id="RHEA-COMP:9681"/>
        <dbReference type="Rhea" id="RHEA-COMP:9684"/>
        <dbReference type="ChEBI" id="CHEBI:15377"/>
        <dbReference type="ChEBI" id="CHEBI:15378"/>
        <dbReference type="ChEBI" id="CHEBI:29985"/>
        <dbReference type="ChEBI" id="CHEBI:30616"/>
        <dbReference type="ChEBI" id="CHEBI:43474"/>
        <dbReference type="ChEBI" id="CHEBI:58359"/>
        <dbReference type="ChEBI" id="CHEBI:78520"/>
        <dbReference type="ChEBI" id="CHEBI:78521"/>
        <dbReference type="ChEBI" id="CHEBI:456216"/>
    </reaction>
</comment>
<comment type="catalytic activity">
    <reaction evidence="1">
        <text>L-aspartyl-tRNA(Asn) + L-glutamine + ATP + H2O = L-asparaginyl-tRNA(Asn) + L-glutamate + ADP + phosphate + 2 H(+)</text>
        <dbReference type="Rhea" id="RHEA:14513"/>
        <dbReference type="Rhea" id="RHEA-COMP:9674"/>
        <dbReference type="Rhea" id="RHEA-COMP:9677"/>
        <dbReference type="ChEBI" id="CHEBI:15377"/>
        <dbReference type="ChEBI" id="CHEBI:15378"/>
        <dbReference type="ChEBI" id="CHEBI:29985"/>
        <dbReference type="ChEBI" id="CHEBI:30616"/>
        <dbReference type="ChEBI" id="CHEBI:43474"/>
        <dbReference type="ChEBI" id="CHEBI:58359"/>
        <dbReference type="ChEBI" id="CHEBI:78515"/>
        <dbReference type="ChEBI" id="CHEBI:78516"/>
        <dbReference type="ChEBI" id="CHEBI:456216"/>
    </reaction>
</comment>
<comment type="subunit">
    <text evidence="1">Heterotrimer of A, B and C subunits.</text>
</comment>
<comment type="similarity">
    <text evidence="1">Belongs to the GatB/GatE family. GatB subfamily.</text>
</comment>
<gene>
    <name evidence="1" type="primary">gatB</name>
    <name type="ordered locus">Cj1197c</name>
</gene>
<reference key="1">
    <citation type="journal article" date="2000" name="Nature">
        <title>The genome sequence of the food-borne pathogen Campylobacter jejuni reveals hypervariable sequences.</title>
        <authorList>
            <person name="Parkhill J."/>
            <person name="Wren B.W."/>
            <person name="Mungall K.L."/>
            <person name="Ketley J.M."/>
            <person name="Churcher C.M."/>
            <person name="Basham D."/>
            <person name="Chillingworth T."/>
            <person name="Davies R.M."/>
            <person name="Feltwell T."/>
            <person name="Holroyd S."/>
            <person name="Jagels K."/>
            <person name="Karlyshev A.V."/>
            <person name="Moule S."/>
            <person name="Pallen M.J."/>
            <person name="Penn C.W."/>
            <person name="Quail M.A."/>
            <person name="Rajandream M.A."/>
            <person name="Rutherford K.M."/>
            <person name="van Vliet A.H.M."/>
            <person name="Whitehead S."/>
            <person name="Barrell B.G."/>
        </authorList>
    </citation>
    <scope>NUCLEOTIDE SEQUENCE [LARGE SCALE GENOMIC DNA]</scope>
    <source>
        <strain>ATCC 700819 / NCTC 11168</strain>
    </source>
</reference>
<proteinExistence type="inferred from homology"/>
<organism>
    <name type="scientific">Campylobacter jejuni subsp. jejuni serotype O:2 (strain ATCC 700819 / NCTC 11168)</name>
    <dbReference type="NCBI Taxonomy" id="192222"/>
    <lineage>
        <taxon>Bacteria</taxon>
        <taxon>Pseudomonadati</taxon>
        <taxon>Campylobacterota</taxon>
        <taxon>Epsilonproteobacteria</taxon>
        <taxon>Campylobacterales</taxon>
        <taxon>Campylobacteraceae</taxon>
        <taxon>Campylobacter</taxon>
    </lineage>
</organism>
<dbReference type="EC" id="6.3.5.-" evidence="1"/>
<dbReference type="EMBL" id="AL111168">
    <property type="protein sequence ID" value="CAL35312.1"/>
    <property type="molecule type" value="Genomic_DNA"/>
</dbReference>
<dbReference type="PIR" id="G81325">
    <property type="entry name" value="G81325"/>
</dbReference>
<dbReference type="RefSeq" id="WP_002858123.1">
    <property type="nucleotide sequence ID" value="NZ_SZUC01000001.1"/>
</dbReference>
<dbReference type="RefSeq" id="YP_002344588.1">
    <property type="nucleotide sequence ID" value="NC_002163.1"/>
</dbReference>
<dbReference type="SMR" id="Q9PN98"/>
<dbReference type="IntAct" id="Q9PN98">
    <property type="interactions" value="106"/>
</dbReference>
<dbReference type="STRING" id="192222.Cj1197c"/>
<dbReference type="PaxDb" id="192222-Cj1197c"/>
<dbReference type="EnsemblBacteria" id="CAL35312">
    <property type="protein sequence ID" value="CAL35312"/>
    <property type="gene ID" value="Cj1197c"/>
</dbReference>
<dbReference type="GeneID" id="905487"/>
<dbReference type="KEGG" id="cje:Cj1197c"/>
<dbReference type="PATRIC" id="fig|192222.6.peg.1178"/>
<dbReference type="eggNOG" id="COG0064">
    <property type="taxonomic scope" value="Bacteria"/>
</dbReference>
<dbReference type="HOGENOM" id="CLU_019240_0_0_7"/>
<dbReference type="OrthoDB" id="9804078at2"/>
<dbReference type="Proteomes" id="UP000000799">
    <property type="component" value="Chromosome"/>
</dbReference>
<dbReference type="GO" id="GO:0050566">
    <property type="term" value="F:asparaginyl-tRNA synthase (glutamine-hydrolyzing) activity"/>
    <property type="evidence" value="ECO:0007669"/>
    <property type="project" value="RHEA"/>
</dbReference>
<dbReference type="GO" id="GO:0005524">
    <property type="term" value="F:ATP binding"/>
    <property type="evidence" value="ECO:0007669"/>
    <property type="project" value="UniProtKB-KW"/>
</dbReference>
<dbReference type="GO" id="GO:0050567">
    <property type="term" value="F:glutaminyl-tRNA synthase (glutamine-hydrolyzing) activity"/>
    <property type="evidence" value="ECO:0007669"/>
    <property type="project" value="UniProtKB-UniRule"/>
</dbReference>
<dbReference type="GO" id="GO:0070681">
    <property type="term" value="P:glutaminyl-tRNAGln biosynthesis via transamidation"/>
    <property type="evidence" value="ECO:0007669"/>
    <property type="project" value="TreeGrafter"/>
</dbReference>
<dbReference type="GO" id="GO:0006412">
    <property type="term" value="P:translation"/>
    <property type="evidence" value="ECO:0007669"/>
    <property type="project" value="UniProtKB-UniRule"/>
</dbReference>
<dbReference type="FunFam" id="1.10.10.410:FF:000001">
    <property type="entry name" value="Aspartyl/glutamyl-tRNA(Asn/Gln) amidotransferase subunit B"/>
    <property type="match status" value="1"/>
</dbReference>
<dbReference type="Gene3D" id="1.10.10.410">
    <property type="match status" value="1"/>
</dbReference>
<dbReference type="Gene3D" id="1.10.150.380">
    <property type="entry name" value="GatB domain, N-terminal subdomain"/>
    <property type="match status" value="1"/>
</dbReference>
<dbReference type="HAMAP" id="MF_00121">
    <property type="entry name" value="GatB"/>
    <property type="match status" value="1"/>
</dbReference>
<dbReference type="InterPro" id="IPR017959">
    <property type="entry name" value="Asn/Gln-tRNA_amidoTrfase_suB/E"/>
</dbReference>
<dbReference type="InterPro" id="IPR006075">
    <property type="entry name" value="Asn/Gln-tRNA_Trfase_suB/E_cat"/>
</dbReference>
<dbReference type="InterPro" id="IPR018027">
    <property type="entry name" value="Asn/Gln_amidotransferase"/>
</dbReference>
<dbReference type="InterPro" id="IPR003789">
    <property type="entry name" value="Asn/Gln_tRNA_amidoTrase-B-like"/>
</dbReference>
<dbReference type="InterPro" id="IPR004413">
    <property type="entry name" value="GatB"/>
</dbReference>
<dbReference type="InterPro" id="IPR042114">
    <property type="entry name" value="GatB_C_1"/>
</dbReference>
<dbReference type="InterPro" id="IPR023168">
    <property type="entry name" value="GatB_Yqey_C_2"/>
</dbReference>
<dbReference type="InterPro" id="IPR017958">
    <property type="entry name" value="Gln-tRNA_amidoTrfase_suB_CS"/>
</dbReference>
<dbReference type="InterPro" id="IPR014746">
    <property type="entry name" value="Gln_synth/guanido_kin_cat_dom"/>
</dbReference>
<dbReference type="NCBIfam" id="TIGR00133">
    <property type="entry name" value="gatB"/>
    <property type="match status" value="1"/>
</dbReference>
<dbReference type="NCBIfam" id="NF004012">
    <property type="entry name" value="PRK05477.1-2"/>
    <property type="match status" value="1"/>
</dbReference>
<dbReference type="NCBIfam" id="NF004014">
    <property type="entry name" value="PRK05477.1-4"/>
    <property type="match status" value="1"/>
</dbReference>
<dbReference type="PANTHER" id="PTHR11659">
    <property type="entry name" value="GLUTAMYL-TRNA GLN AMIDOTRANSFERASE SUBUNIT B MITOCHONDRIAL AND PROKARYOTIC PET112-RELATED"/>
    <property type="match status" value="1"/>
</dbReference>
<dbReference type="PANTHER" id="PTHR11659:SF0">
    <property type="entry name" value="GLUTAMYL-TRNA(GLN) AMIDOTRANSFERASE SUBUNIT B, MITOCHONDRIAL"/>
    <property type="match status" value="1"/>
</dbReference>
<dbReference type="Pfam" id="PF02934">
    <property type="entry name" value="GatB_N"/>
    <property type="match status" value="1"/>
</dbReference>
<dbReference type="Pfam" id="PF02637">
    <property type="entry name" value="GatB_Yqey"/>
    <property type="match status" value="1"/>
</dbReference>
<dbReference type="SMART" id="SM00845">
    <property type="entry name" value="GatB_Yqey"/>
    <property type="match status" value="1"/>
</dbReference>
<dbReference type="SUPFAM" id="SSF89095">
    <property type="entry name" value="GatB/YqeY motif"/>
    <property type="match status" value="1"/>
</dbReference>
<dbReference type="SUPFAM" id="SSF55931">
    <property type="entry name" value="Glutamine synthetase/guanido kinase"/>
    <property type="match status" value="1"/>
</dbReference>
<dbReference type="PROSITE" id="PS01234">
    <property type="entry name" value="GATB"/>
    <property type="match status" value="1"/>
</dbReference>
<feature type="chain" id="PRO_0000148772" description="Aspartyl/glutamyl-tRNA(Asn/Gln) amidotransferase subunit B">
    <location>
        <begin position="1"/>
        <end position="472"/>
    </location>
</feature>
<keyword id="KW-0067">ATP-binding</keyword>
<keyword id="KW-0436">Ligase</keyword>
<keyword id="KW-0547">Nucleotide-binding</keyword>
<keyword id="KW-0648">Protein biosynthesis</keyword>
<keyword id="KW-1185">Reference proteome</keyword>
<protein>
    <recommendedName>
        <fullName evidence="1">Aspartyl/glutamyl-tRNA(Asn/Gln) amidotransferase subunit B</fullName>
        <shortName evidence="1">Asp/Glu-ADT subunit B</shortName>
        <ecNumber evidence="1">6.3.5.-</ecNumber>
    </recommendedName>
</protein>
<name>GATB_CAMJE</name>
<evidence type="ECO:0000255" key="1">
    <source>
        <dbReference type="HAMAP-Rule" id="MF_00121"/>
    </source>
</evidence>
<accession>Q9PN98</accession>
<accession>Q0P959</accession>